<name>TRPF_RHOPB</name>
<proteinExistence type="inferred from homology"/>
<dbReference type="EC" id="5.3.1.24" evidence="1"/>
<dbReference type="EMBL" id="CP000301">
    <property type="protein sequence ID" value="ABD85968.1"/>
    <property type="molecule type" value="Genomic_DNA"/>
</dbReference>
<dbReference type="SMR" id="Q21CB8"/>
<dbReference type="STRING" id="316056.RPC_0393"/>
<dbReference type="KEGG" id="rpc:RPC_0393"/>
<dbReference type="eggNOG" id="COG0135">
    <property type="taxonomic scope" value="Bacteria"/>
</dbReference>
<dbReference type="HOGENOM" id="CLU_076364_1_1_5"/>
<dbReference type="OrthoDB" id="9796196at2"/>
<dbReference type="UniPathway" id="UPA00035">
    <property type="reaction ID" value="UER00042"/>
</dbReference>
<dbReference type="GO" id="GO:0004640">
    <property type="term" value="F:phosphoribosylanthranilate isomerase activity"/>
    <property type="evidence" value="ECO:0007669"/>
    <property type="project" value="UniProtKB-UniRule"/>
</dbReference>
<dbReference type="GO" id="GO:0000162">
    <property type="term" value="P:L-tryptophan biosynthetic process"/>
    <property type="evidence" value="ECO:0007669"/>
    <property type="project" value="UniProtKB-UniRule"/>
</dbReference>
<dbReference type="CDD" id="cd00405">
    <property type="entry name" value="PRAI"/>
    <property type="match status" value="1"/>
</dbReference>
<dbReference type="Gene3D" id="3.20.20.70">
    <property type="entry name" value="Aldolase class I"/>
    <property type="match status" value="1"/>
</dbReference>
<dbReference type="HAMAP" id="MF_00135">
    <property type="entry name" value="PRAI"/>
    <property type="match status" value="1"/>
</dbReference>
<dbReference type="InterPro" id="IPR013785">
    <property type="entry name" value="Aldolase_TIM"/>
</dbReference>
<dbReference type="InterPro" id="IPR001240">
    <property type="entry name" value="PRAI_dom"/>
</dbReference>
<dbReference type="InterPro" id="IPR011060">
    <property type="entry name" value="RibuloseP-bd_barrel"/>
</dbReference>
<dbReference type="InterPro" id="IPR044643">
    <property type="entry name" value="TrpF_fam"/>
</dbReference>
<dbReference type="NCBIfam" id="NF002295">
    <property type="entry name" value="PRK01222.1-1"/>
    <property type="match status" value="1"/>
</dbReference>
<dbReference type="PANTHER" id="PTHR42894">
    <property type="entry name" value="N-(5'-PHOSPHORIBOSYL)ANTHRANILATE ISOMERASE"/>
    <property type="match status" value="1"/>
</dbReference>
<dbReference type="PANTHER" id="PTHR42894:SF1">
    <property type="entry name" value="N-(5'-PHOSPHORIBOSYL)ANTHRANILATE ISOMERASE"/>
    <property type="match status" value="1"/>
</dbReference>
<dbReference type="Pfam" id="PF00697">
    <property type="entry name" value="PRAI"/>
    <property type="match status" value="1"/>
</dbReference>
<dbReference type="SUPFAM" id="SSF51366">
    <property type="entry name" value="Ribulose-phoshate binding barrel"/>
    <property type="match status" value="1"/>
</dbReference>
<evidence type="ECO:0000255" key="1">
    <source>
        <dbReference type="HAMAP-Rule" id="MF_00135"/>
    </source>
</evidence>
<organism>
    <name type="scientific">Rhodopseudomonas palustris (strain BisB18)</name>
    <dbReference type="NCBI Taxonomy" id="316056"/>
    <lineage>
        <taxon>Bacteria</taxon>
        <taxon>Pseudomonadati</taxon>
        <taxon>Pseudomonadota</taxon>
        <taxon>Alphaproteobacteria</taxon>
        <taxon>Hyphomicrobiales</taxon>
        <taxon>Nitrobacteraceae</taxon>
        <taxon>Rhodopseudomonas</taxon>
    </lineage>
</organism>
<accession>Q21CB8</accession>
<reference key="1">
    <citation type="submission" date="2006-03" db="EMBL/GenBank/DDBJ databases">
        <title>Complete sequence of Rhodopseudomonas palustris BisB18.</title>
        <authorList>
            <consortium name="US DOE Joint Genome Institute"/>
            <person name="Copeland A."/>
            <person name="Lucas S."/>
            <person name="Lapidus A."/>
            <person name="Barry K."/>
            <person name="Detter J.C."/>
            <person name="Glavina del Rio T."/>
            <person name="Hammon N."/>
            <person name="Israni S."/>
            <person name="Dalin E."/>
            <person name="Tice H."/>
            <person name="Pitluck S."/>
            <person name="Chain P."/>
            <person name="Malfatti S."/>
            <person name="Shin M."/>
            <person name="Vergez L."/>
            <person name="Schmutz J."/>
            <person name="Larimer F."/>
            <person name="Land M."/>
            <person name="Hauser L."/>
            <person name="Pelletier D.A."/>
            <person name="Kyrpides N."/>
            <person name="Anderson I."/>
            <person name="Oda Y."/>
            <person name="Harwood C.S."/>
            <person name="Richardson P."/>
        </authorList>
    </citation>
    <scope>NUCLEOTIDE SEQUENCE [LARGE SCALE GENOMIC DNA]</scope>
    <source>
        <strain>BisB18</strain>
    </source>
</reference>
<gene>
    <name evidence="1" type="primary">trpF</name>
    <name type="ordered locus">RPC_0393</name>
</gene>
<keyword id="KW-0028">Amino-acid biosynthesis</keyword>
<keyword id="KW-0057">Aromatic amino acid biosynthesis</keyword>
<keyword id="KW-0413">Isomerase</keyword>
<keyword id="KW-0822">Tryptophan biosynthesis</keyword>
<sequence length="218" mass="22611">MPLVVKICGLSTRATLDAALAAGADMVGFVVFPASPRHVDLALARQLGDATGDRAAKVALTVDADDALLESVIETLRPDILQLHGHESAARVAEIRRTFGLPVMKVLGVASAADLAPLPDYAAVADRILFDARAPKGASRPGGLGAVFDWQLLRDLDLALPFMVSGGLTADNVAEAVRITGAGGVDISSGVETAPGVKDPDLIRAFIRAARASQELMI</sequence>
<comment type="catalytic activity">
    <reaction evidence="1">
        <text>N-(5-phospho-beta-D-ribosyl)anthranilate = 1-(2-carboxyphenylamino)-1-deoxy-D-ribulose 5-phosphate</text>
        <dbReference type="Rhea" id="RHEA:21540"/>
        <dbReference type="ChEBI" id="CHEBI:18277"/>
        <dbReference type="ChEBI" id="CHEBI:58613"/>
        <dbReference type="EC" id="5.3.1.24"/>
    </reaction>
</comment>
<comment type="pathway">
    <text evidence="1">Amino-acid biosynthesis; L-tryptophan biosynthesis; L-tryptophan from chorismate: step 3/5.</text>
</comment>
<comment type="similarity">
    <text evidence="1">Belongs to the TrpF family.</text>
</comment>
<protein>
    <recommendedName>
        <fullName evidence="1">N-(5'-phosphoribosyl)anthranilate isomerase</fullName>
        <shortName evidence="1">PRAI</shortName>
        <ecNumber evidence="1">5.3.1.24</ecNumber>
    </recommendedName>
</protein>
<feature type="chain" id="PRO_1000018634" description="N-(5'-phosphoribosyl)anthranilate isomerase">
    <location>
        <begin position="1"/>
        <end position="218"/>
    </location>
</feature>